<protein>
    <recommendedName>
        <fullName evidence="2">Large ribosomal subunit protein uL22c</fullName>
    </recommendedName>
    <alternativeName>
        <fullName>50S ribosomal protein L22, chloroplastic</fullName>
    </alternativeName>
</protein>
<evidence type="ECO:0000250" key="1"/>
<evidence type="ECO:0000305" key="2"/>
<geneLocation type="chloroplast"/>
<organism>
    <name type="scientific">Ceratophyllum demersum</name>
    <name type="common">Rigid hornwort</name>
    <name type="synonym">Coontail</name>
    <dbReference type="NCBI Taxonomy" id="4428"/>
    <lineage>
        <taxon>Eukaryota</taxon>
        <taxon>Viridiplantae</taxon>
        <taxon>Streptophyta</taxon>
        <taxon>Embryophyta</taxon>
        <taxon>Tracheophyta</taxon>
        <taxon>Spermatophyta</taxon>
        <taxon>Magnoliopsida</taxon>
        <taxon>Ceratophyllales</taxon>
        <taxon>Ceratophyllaceae</taxon>
        <taxon>Ceratophyllum</taxon>
    </lineage>
</organism>
<proteinExistence type="inferred from homology"/>
<accession>A8SEE3</accession>
<feature type="chain" id="PRO_0000354562" description="Large ribosomal subunit protein uL22c">
    <location>
        <begin position="1"/>
        <end position="142"/>
    </location>
</feature>
<reference key="1">
    <citation type="journal article" date="2007" name="Proc. Natl. Acad. Sci. U.S.A.">
        <title>Using plastid genome-scale data to resolve enigmatic relationships among basal angiosperms.</title>
        <authorList>
            <person name="Moore M.J."/>
            <person name="Bell C.D."/>
            <person name="Soltis P.S."/>
            <person name="Soltis D.E."/>
        </authorList>
    </citation>
    <scope>NUCLEOTIDE SEQUENCE [LARGE SCALE GENOMIC DNA]</scope>
</reference>
<reference key="2">
    <citation type="journal article" date="2008" name="BMC Evol. Biol.">
        <title>Dynamics and evolution of the inverted repeat-large single copy junctions in the chloroplast genomes of monocots.</title>
        <authorList>
            <person name="Wang R.-J."/>
            <person name="Cheng C.-L."/>
            <person name="Chang C.-C."/>
            <person name="Wu C.-L."/>
            <person name="Su T.-M."/>
            <person name="Chaw S.-M."/>
        </authorList>
    </citation>
    <scope>NUCLEOTIDE SEQUENCE [GENOMIC DNA]</scope>
</reference>
<keyword id="KW-0150">Chloroplast</keyword>
<keyword id="KW-0934">Plastid</keyword>
<keyword id="KW-0687">Ribonucleoprotein</keyword>
<keyword id="KW-0689">Ribosomal protein</keyword>
<keyword id="KW-0694">RNA-binding</keyword>
<keyword id="KW-0699">rRNA-binding</keyword>
<gene>
    <name type="primary">rpl22</name>
</gene>
<name>RK22_CERDE</name>
<sequence>MKKRKSRTEVKAVAQYIHMSAHKARRVVDQIRGRSYEETLMILELMPYRASYPIFKLVYSAAANANHNMGFNEADSFISKAEVNEGVIVKKLNPQARGRSYTIKRSTCHITIVLKDRTKKEPTSILERRYGWVDEYKIKYSR</sequence>
<comment type="function">
    <text evidence="1">This protein binds specifically to 23S rRNA.</text>
</comment>
<comment type="function">
    <text evidence="1">The globular domain of the protein is located near the polypeptide exit tunnel on the outside of the subunit, while an extended beta-hairpin is found that lines the wall of the exit tunnel in the center of the 70S ribosome.</text>
</comment>
<comment type="subunit">
    <text evidence="1">Part of the 50S ribosomal subunit.</text>
</comment>
<comment type="subcellular location">
    <subcellularLocation>
        <location>Plastid</location>
        <location>Chloroplast</location>
    </subcellularLocation>
</comment>
<comment type="similarity">
    <text evidence="2">Belongs to the universal ribosomal protein uL22 family.</text>
</comment>
<dbReference type="EMBL" id="EF614270">
    <property type="protein sequence ID" value="ABQ81491.1"/>
    <property type="molecule type" value="Genomic_DNA"/>
</dbReference>
<dbReference type="EMBL" id="AB331348">
    <property type="protein sequence ID" value="BAG06543.1"/>
    <property type="molecule type" value="Genomic_DNA"/>
</dbReference>
<dbReference type="RefSeq" id="YP_001542487.1">
    <property type="nucleotide sequence ID" value="NC_009962.1"/>
</dbReference>
<dbReference type="SMR" id="A8SEE3"/>
<dbReference type="GeneID" id="5729466"/>
<dbReference type="GO" id="GO:0009507">
    <property type="term" value="C:chloroplast"/>
    <property type="evidence" value="ECO:0007669"/>
    <property type="project" value="UniProtKB-SubCell"/>
</dbReference>
<dbReference type="GO" id="GO:0015934">
    <property type="term" value="C:large ribosomal subunit"/>
    <property type="evidence" value="ECO:0007669"/>
    <property type="project" value="InterPro"/>
</dbReference>
<dbReference type="GO" id="GO:0019843">
    <property type="term" value="F:rRNA binding"/>
    <property type="evidence" value="ECO:0007669"/>
    <property type="project" value="UniProtKB-UniRule"/>
</dbReference>
<dbReference type="GO" id="GO:0003735">
    <property type="term" value="F:structural constituent of ribosome"/>
    <property type="evidence" value="ECO:0007669"/>
    <property type="project" value="InterPro"/>
</dbReference>
<dbReference type="GO" id="GO:0006412">
    <property type="term" value="P:translation"/>
    <property type="evidence" value="ECO:0007669"/>
    <property type="project" value="UniProtKB-UniRule"/>
</dbReference>
<dbReference type="CDD" id="cd00336">
    <property type="entry name" value="Ribosomal_L22"/>
    <property type="match status" value="1"/>
</dbReference>
<dbReference type="FunFam" id="3.90.470.10:FF:000006">
    <property type="entry name" value="50S ribosomal protein L22, chloroplastic"/>
    <property type="match status" value="1"/>
</dbReference>
<dbReference type="Gene3D" id="3.90.470.10">
    <property type="entry name" value="Ribosomal protein L22/L17"/>
    <property type="match status" value="1"/>
</dbReference>
<dbReference type="HAMAP" id="MF_01331_B">
    <property type="entry name" value="Ribosomal_uL22_B"/>
    <property type="match status" value="1"/>
</dbReference>
<dbReference type="InterPro" id="IPR001063">
    <property type="entry name" value="Ribosomal_uL22"/>
</dbReference>
<dbReference type="InterPro" id="IPR005727">
    <property type="entry name" value="Ribosomal_uL22_bac/chlpt-type"/>
</dbReference>
<dbReference type="InterPro" id="IPR047867">
    <property type="entry name" value="Ribosomal_uL22_bac/org-type"/>
</dbReference>
<dbReference type="InterPro" id="IPR036394">
    <property type="entry name" value="Ribosomal_uL22_sf"/>
</dbReference>
<dbReference type="NCBIfam" id="TIGR01044">
    <property type="entry name" value="rplV_bact"/>
    <property type="match status" value="1"/>
</dbReference>
<dbReference type="PANTHER" id="PTHR13501">
    <property type="entry name" value="CHLOROPLAST 50S RIBOSOMAL PROTEIN L22-RELATED"/>
    <property type="match status" value="1"/>
</dbReference>
<dbReference type="PANTHER" id="PTHR13501:SF10">
    <property type="entry name" value="LARGE RIBOSOMAL SUBUNIT PROTEIN UL22M"/>
    <property type="match status" value="1"/>
</dbReference>
<dbReference type="Pfam" id="PF00237">
    <property type="entry name" value="Ribosomal_L22"/>
    <property type="match status" value="1"/>
</dbReference>
<dbReference type="SUPFAM" id="SSF54843">
    <property type="entry name" value="Ribosomal protein L22"/>
    <property type="match status" value="1"/>
</dbReference>